<reference key="1">
    <citation type="journal article" date="1984" name="J. Mol. Appl. Genet.">
        <title>Expression and regulation of alpha-amylase gene family in barley aleurones.</title>
        <authorList>
            <person name="Huang J.-K."/>
            <person name="Swegle M."/>
            <person name="Dandekar A.M."/>
            <person name="Muthukrishnan S."/>
        </authorList>
    </citation>
    <scope>NUCLEOTIDE SEQUENCE [MRNA]</scope>
</reference>
<comment type="catalytic activity">
    <reaction evidence="2">
        <text>Endohydrolysis of (1-&gt;4)-alpha-D-glucosidic linkages in polysaccharides containing three or more (1-&gt;4)-alpha-linked D-glucose units.</text>
        <dbReference type="EC" id="3.2.1.1"/>
    </reaction>
</comment>
<comment type="cofactor">
    <cofactor evidence="2">
        <name>Ca(2+)</name>
        <dbReference type="ChEBI" id="CHEBI:29108"/>
    </cofactor>
    <text evidence="2">Binds 3 Ca(2+) ions per subunit.</text>
</comment>
<comment type="subunit">
    <text evidence="1">Monomer.</text>
</comment>
<comment type="developmental stage">
    <text>Production of alpha-amylase is hormonally regulated. Germinating embryos produce the hormone gibberellic acid, which within 10 hours stimulates the aleurone cells covering the endosperm of the seed to produce alpha-amylase. The enzyme then degrades the starch within the endosperm for use by the developing plant embryo.</text>
</comment>
<comment type="miscellaneous">
    <text>There are at least 4 types of alpha-amylase in barley.</text>
</comment>
<comment type="miscellaneous">
    <text>Type B isozyme mRNA is undetectable in unstimulated cells and increases a hundred-fold after stimulation with gibberellic acid.</text>
</comment>
<comment type="similarity">
    <text evidence="4">Belongs to the glycosyl hydrolase 13 family.</text>
</comment>
<sequence length="153" mass="17276">ILNVAVEGALWRLRGTDGKAPSMIGWWPAKAVTFVDNHDTGSTQHMWPFPSDRVMQGYAYILTHPRTPCIFYDHFFDWGPKEEIDRLVSVRTRHGIHNESKLQIIEADADLYLAEIDGKVIVKLGPRYDVGNLIPGGFEGAAHGNDYAVWEKI</sequence>
<proteinExistence type="evidence at transcript level"/>
<gene>
    <name type="primary">AMY1.4</name>
</gene>
<dbReference type="EC" id="3.2.1.1" evidence="2"/>
<dbReference type="EMBL" id="M10056">
    <property type="protein sequence ID" value="AAA32930.1"/>
    <property type="molecule type" value="mRNA"/>
</dbReference>
<dbReference type="PIR" id="A21826">
    <property type="entry name" value="A21826"/>
</dbReference>
<dbReference type="SMR" id="P04748"/>
<dbReference type="CAZy" id="GH13">
    <property type="family name" value="Glycoside Hydrolase Family 13"/>
</dbReference>
<dbReference type="ExpressionAtlas" id="P04748">
    <property type="expression patterns" value="baseline"/>
</dbReference>
<dbReference type="GO" id="GO:0004556">
    <property type="term" value="F:alpha-amylase activity"/>
    <property type="evidence" value="ECO:0007669"/>
    <property type="project" value="UniProtKB-EC"/>
</dbReference>
<dbReference type="GO" id="GO:0005509">
    <property type="term" value="F:calcium ion binding"/>
    <property type="evidence" value="ECO:0007669"/>
    <property type="project" value="InterPro"/>
</dbReference>
<dbReference type="GO" id="GO:0000272">
    <property type="term" value="P:polysaccharide catabolic process"/>
    <property type="evidence" value="ECO:0007669"/>
    <property type="project" value="UniProtKB-ARBA"/>
</dbReference>
<dbReference type="FunFam" id="2.60.40.1180:FF:000021">
    <property type="entry name" value="Alpha-amylase"/>
    <property type="match status" value="1"/>
</dbReference>
<dbReference type="Gene3D" id="3.20.20.80">
    <property type="entry name" value="Glycosidases"/>
    <property type="match status" value="1"/>
</dbReference>
<dbReference type="Gene3D" id="2.60.40.1180">
    <property type="entry name" value="Golgi alpha-mannosidase II"/>
    <property type="match status" value="1"/>
</dbReference>
<dbReference type="InterPro" id="IPR012850">
    <property type="entry name" value="A-amylase_bs_C"/>
</dbReference>
<dbReference type="InterPro" id="IPR013780">
    <property type="entry name" value="Glyco_hydro_b"/>
</dbReference>
<dbReference type="InterPro" id="IPR017853">
    <property type="entry name" value="Glycoside_hydrolase_SF"/>
</dbReference>
<dbReference type="PANTHER" id="PTHR43447">
    <property type="entry name" value="ALPHA-AMYLASE"/>
    <property type="match status" value="1"/>
</dbReference>
<dbReference type="Pfam" id="PF07821">
    <property type="entry name" value="Alpha-amyl_C2"/>
    <property type="match status" value="1"/>
</dbReference>
<dbReference type="SMART" id="SM00810">
    <property type="entry name" value="Alpha-amyl_C2"/>
    <property type="match status" value="1"/>
</dbReference>
<dbReference type="SUPFAM" id="SSF51445">
    <property type="entry name" value="(Trans)glycosidases"/>
    <property type="match status" value="1"/>
</dbReference>
<dbReference type="SUPFAM" id="SSF51011">
    <property type="entry name" value="Glycosyl hydrolase domain"/>
    <property type="match status" value="1"/>
</dbReference>
<keyword id="KW-0106">Calcium</keyword>
<keyword id="KW-0119">Carbohydrate metabolism</keyword>
<keyword id="KW-0309">Germination</keyword>
<keyword id="KW-0326">Glycosidase</keyword>
<keyword id="KW-0378">Hydrolase</keyword>
<evidence type="ECO:0000250" key="1"/>
<evidence type="ECO:0000250" key="2">
    <source>
        <dbReference type="UniProtKB" id="P00693"/>
    </source>
</evidence>
<evidence type="ECO:0000250" key="3">
    <source>
        <dbReference type="UniProtKB" id="P04063"/>
    </source>
</evidence>
<evidence type="ECO:0000305" key="4"/>
<organism>
    <name type="scientific">Hordeum vulgare</name>
    <name type="common">Barley</name>
    <dbReference type="NCBI Taxonomy" id="4513"/>
    <lineage>
        <taxon>Eukaryota</taxon>
        <taxon>Viridiplantae</taxon>
        <taxon>Streptophyta</taxon>
        <taxon>Embryophyta</taxon>
        <taxon>Tracheophyta</taxon>
        <taxon>Spermatophyta</taxon>
        <taxon>Magnoliopsida</taxon>
        <taxon>Liliopsida</taxon>
        <taxon>Poales</taxon>
        <taxon>Poaceae</taxon>
        <taxon>BOP clade</taxon>
        <taxon>Pooideae</taxon>
        <taxon>Triticodae</taxon>
        <taxon>Triticeae</taxon>
        <taxon>Hordeinae</taxon>
        <taxon>Hordeum</taxon>
    </lineage>
</organism>
<feature type="chain" id="PRO_0000054292" description="Alpha-amylase type B isozyme">
    <location>
        <begin position="1" status="less than"/>
        <end position="153"/>
    </location>
</feature>
<feature type="binding site" evidence="2">
    <location>
        <position position="19"/>
    </location>
    <ligand>
        <name>substrate</name>
    </ligand>
</feature>
<feature type="binding site" evidence="3">
    <location>
        <begin position="25"/>
        <end position="27"/>
    </location>
    <ligand>
        <name>substrate</name>
    </ligand>
</feature>
<feature type="binding site" evidence="2">
    <location>
        <position position="38"/>
    </location>
    <ligand>
        <name>substrate</name>
    </ligand>
</feature>
<feature type="binding site" evidence="2">
    <location>
        <position position="44"/>
    </location>
    <ligand>
        <name>substrate</name>
    </ligand>
</feature>
<feature type="binding site" evidence="2">
    <location>
        <position position="123"/>
    </location>
    <ligand>
        <name>substrate</name>
    </ligand>
</feature>
<feature type="binding site" evidence="2">
    <location>
        <position position="150"/>
    </location>
    <ligand>
        <name>substrate</name>
    </ligand>
</feature>
<feature type="site" description="Transition state stabilizer" evidence="2">
    <location>
        <position position="39"/>
    </location>
</feature>
<feature type="non-terminal residue">
    <location>
        <position position="1"/>
    </location>
</feature>
<name>AMY4_HORVU</name>
<protein>
    <recommendedName>
        <fullName>Alpha-amylase type B isozyme</fullName>
        <ecNumber evidence="2">3.2.1.1</ecNumber>
    </recommendedName>
    <alternativeName>
        <fullName>1,4-alpha-D-glucan glucanohydrolase</fullName>
    </alternativeName>
    <alternativeName>
        <fullName>Clone 103</fullName>
    </alternativeName>
</protein>
<accession>P04748</accession>